<accession>B4U041</accession>
<protein>
    <recommendedName>
        <fullName evidence="1">Putative 4-diphosphocytidyl-2-C-methyl-D-erythritol kinase</fullName>
        <shortName evidence="1">CMK</shortName>
        <ecNumber evidence="1">2.7.1.148</ecNumber>
    </recommendedName>
    <alternativeName>
        <fullName evidence="1">4-(cytidine-5'-diphospho)-2-C-methyl-D-erythritol kinase</fullName>
    </alternativeName>
</protein>
<evidence type="ECO:0000255" key="1">
    <source>
        <dbReference type="HAMAP-Rule" id="MF_00061"/>
    </source>
</evidence>
<keyword id="KW-0067">ATP-binding</keyword>
<keyword id="KW-0418">Kinase</keyword>
<keyword id="KW-0547">Nucleotide-binding</keyword>
<keyword id="KW-0808">Transferase</keyword>
<sequence length="283" mass="31123">MTAIIERAPAKINLGLDIQGKRPDGYHDLSMVLVSVDLCDYITVDHLEEDRILLTSNCPRLPINEHNDVYKAAYLLKERFQISTGVSIFLDKRVPVCAGMGGGSSDAAAAIRALNQLWQLKLSPRQMIDIGMQIGSDVPYCLFAGCAQVTGKGEVVKPINGRLSSWVVLVKPEFGISTRTIFWDIDCETISRVPIEDLVSAIEAGDYQRLLATMGNSLEDISIAKRPFIQKVKDKMLQSGADIALMTGSGPTVFALCQTEKQANRVVNSLKGFCKEVYKVRTL</sequence>
<name>ISPE_STREM</name>
<proteinExistence type="inferred from homology"/>
<comment type="function">
    <text evidence="1">Catalyzes the phosphorylation of the position 2 hydroxy group of 4-diphosphocytidyl-2C-methyl-D-erythritol.</text>
</comment>
<comment type="catalytic activity">
    <reaction evidence="1">
        <text>4-CDP-2-C-methyl-D-erythritol + ATP = 4-CDP-2-C-methyl-D-erythritol 2-phosphate + ADP + H(+)</text>
        <dbReference type="Rhea" id="RHEA:18437"/>
        <dbReference type="ChEBI" id="CHEBI:15378"/>
        <dbReference type="ChEBI" id="CHEBI:30616"/>
        <dbReference type="ChEBI" id="CHEBI:57823"/>
        <dbReference type="ChEBI" id="CHEBI:57919"/>
        <dbReference type="ChEBI" id="CHEBI:456216"/>
        <dbReference type="EC" id="2.7.1.148"/>
    </reaction>
</comment>
<comment type="similarity">
    <text evidence="1">Belongs to the GHMP kinase family. IspE subfamily.</text>
</comment>
<reference key="1">
    <citation type="journal article" date="2008" name="PLoS ONE">
        <title>Genome sequence of a lancefield group C Streptococcus zooepidemicus strain causing epidemic nephritis: new information about an old disease.</title>
        <authorList>
            <person name="Beres S.B."/>
            <person name="Sesso R."/>
            <person name="Pinto S.W.L."/>
            <person name="Hoe N.P."/>
            <person name="Porcella S.F."/>
            <person name="Deleo F.R."/>
            <person name="Musser J.M."/>
        </authorList>
    </citation>
    <scope>NUCLEOTIDE SEQUENCE [LARGE SCALE GENOMIC DNA]</scope>
    <source>
        <strain>MGCS10565</strain>
    </source>
</reference>
<organism>
    <name type="scientific">Streptococcus equi subsp. zooepidemicus (strain MGCS10565)</name>
    <dbReference type="NCBI Taxonomy" id="552526"/>
    <lineage>
        <taxon>Bacteria</taxon>
        <taxon>Bacillati</taxon>
        <taxon>Bacillota</taxon>
        <taxon>Bacilli</taxon>
        <taxon>Lactobacillales</taxon>
        <taxon>Streptococcaceae</taxon>
        <taxon>Streptococcus</taxon>
    </lineage>
</organism>
<dbReference type="EC" id="2.7.1.148" evidence="1"/>
<dbReference type="EMBL" id="CP001129">
    <property type="protein sequence ID" value="ACG61484.1"/>
    <property type="molecule type" value="Genomic_DNA"/>
</dbReference>
<dbReference type="SMR" id="B4U041"/>
<dbReference type="KEGG" id="sez:Sez_0102"/>
<dbReference type="HOGENOM" id="CLU_053057_1_1_9"/>
<dbReference type="Proteomes" id="UP000001873">
    <property type="component" value="Chromosome"/>
</dbReference>
<dbReference type="GO" id="GO:0050515">
    <property type="term" value="F:4-(cytidine 5'-diphospho)-2-C-methyl-D-erythritol kinase activity"/>
    <property type="evidence" value="ECO:0007669"/>
    <property type="project" value="UniProtKB-UniRule"/>
</dbReference>
<dbReference type="GO" id="GO:0005524">
    <property type="term" value="F:ATP binding"/>
    <property type="evidence" value="ECO:0007669"/>
    <property type="project" value="UniProtKB-UniRule"/>
</dbReference>
<dbReference type="GO" id="GO:0016114">
    <property type="term" value="P:terpenoid biosynthetic process"/>
    <property type="evidence" value="ECO:0007669"/>
    <property type="project" value="InterPro"/>
</dbReference>
<dbReference type="Gene3D" id="3.30.230.10">
    <property type="match status" value="1"/>
</dbReference>
<dbReference type="Gene3D" id="3.30.70.890">
    <property type="entry name" value="GHMP kinase, C-terminal domain"/>
    <property type="match status" value="1"/>
</dbReference>
<dbReference type="HAMAP" id="MF_00061">
    <property type="entry name" value="IspE"/>
    <property type="match status" value="1"/>
</dbReference>
<dbReference type="InterPro" id="IPR013750">
    <property type="entry name" value="GHMP_kinase_C_dom"/>
</dbReference>
<dbReference type="InterPro" id="IPR036554">
    <property type="entry name" value="GHMP_kinase_C_sf"/>
</dbReference>
<dbReference type="InterPro" id="IPR006204">
    <property type="entry name" value="GHMP_kinase_N_dom"/>
</dbReference>
<dbReference type="InterPro" id="IPR004424">
    <property type="entry name" value="IspE"/>
</dbReference>
<dbReference type="InterPro" id="IPR020568">
    <property type="entry name" value="Ribosomal_Su5_D2-typ_SF"/>
</dbReference>
<dbReference type="InterPro" id="IPR014721">
    <property type="entry name" value="Ribsml_uS5_D2-typ_fold_subgr"/>
</dbReference>
<dbReference type="NCBIfam" id="TIGR00154">
    <property type="entry name" value="ispE"/>
    <property type="match status" value="1"/>
</dbReference>
<dbReference type="NCBIfam" id="NF011202">
    <property type="entry name" value="PRK14608.1"/>
    <property type="match status" value="1"/>
</dbReference>
<dbReference type="PANTHER" id="PTHR43527">
    <property type="entry name" value="4-DIPHOSPHOCYTIDYL-2-C-METHYL-D-ERYTHRITOL KINASE, CHLOROPLASTIC"/>
    <property type="match status" value="1"/>
</dbReference>
<dbReference type="PANTHER" id="PTHR43527:SF2">
    <property type="entry name" value="4-DIPHOSPHOCYTIDYL-2-C-METHYL-D-ERYTHRITOL KINASE, CHLOROPLASTIC"/>
    <property type="match status" value="1"/>
</dbReference>
<dbReference type="Pfam" id="PF08544">
    <property type="entry name" value="GHMP_kinases_C"/>
    <property type="match status" value="1"/>
</dbReference>
<dbReference type="Pfam" id="PF00288">
    <property type="entry name" value="GHMP_kinases_N"/>
    <property type="match status" value="1"/>
</dbReference>
<dbReference type="PIRSF" id="PIRSF010376">
    <property type="entry name" value="IspE"/>
    <property type="match status" value="1"/>
</dbReference>
<dbReference type="PRINTS" id="PR00958">
    <property type="entry name" value="HOMSERKINASE"/>
</dbReference>
<dbReference type="SUPFAM" id="SSF55060">
    <property type="entry name" value="GHMP Kinase, C-terminal domain"/>
    <property type="match status" value="1"/>
</dbReference>
<dbReference type="SUPFAM" id="SSF54211">
    <property type="entry name" value="Ribosomal protein S5 domain 2-like"/>
    <property type="match status" value="1"/>
</dbReference>
<gene>
    <name type="ordered locus">Sez_0102</name>
</gene>
<feature type="chain" id="PRO_1000116935" description="Putative 4-diphosphocytidyl-2-C-methyl-D-erythritol kinase">
    <location>
        <begin position="1"/>
        <end position="283"/>
    </location>
</feature>
<feature type="active site" evidence="1">
    <location>
        <position position="11"/>
    </location>
</feature>
<feature type="active site" evidence="1">
    <location>
        <position position="137"/>
    </location>
</feature>
<feature type="binding site" evidence="1">
    <location>
        <begin position="95"/>
        <end position="105"/>
    </location>
    <ligand>
        <name>ATP</name>
        <dbReference type="ChEBI" id="CHEBI:30616"/>
    </ligand>
</feature>